<reference key="1">
    <citation type="journal article" date="2001" name="DNA Res.">
        <title>Complete genome sequence of an aerobic thermoacidophilic Crenarchaeon, Sulfolobus tokodaii strain7.</title>
        <authorList>
            <person name="Kawarabayasi Y."/>
            <person name="Hino Y."/>
            <person name="Horikawa H."/>
            <person name="Jin-no K."/>
            <person name="Takahashi M."/>
            <person name="Sekine M."/>
            <person name="Baba S."/>
            <person name="Ankai A."/>
            <person name="Kosugi H."/>
            <person name="Hosoyama A."/>
            <person name="Fukui S."/>
            <person name="Nagai Y."/>
            <person name="Nishijima K."/>
            <person name="Otsuka R."/>
            <person name="Nakazawa H."/>
            <person name="Takamiya M."/>
            <person name="Kato Y."/>
            <person name="Yoshizawa T."/>
            <person name="Tanaka T."/>
            <person name="Kudoh Y."/>
            <person name="Yamazaki J."/>
            <person name="Kushida N."/>
            <person name="Oguchi A."/>
            <person name="Aoki K."/>
            <person name="Masuda S."/>
            <person name="Yanagii M."/>
            <person name="Nishimura M."/>
            <person name="Yamagishi A."/>
            <person name="Oshima T."/>
            <person name="Kikuchi H."/>
        </authorList>
    </citation>
    <scope>NUCLEOTIDE SEQUENCE [LARGE SCALE GENOMIC DNA]</scope>
    <source>
        <strain>DSM 16993 / JCM 10545 / NBRC 100140 / 7</strain>
    </source>
</reference>
<comment type="catalytic activity">
    <reaction evidence="1">
        <text>2 reduced [2Fe-2S]-[ferredoxin] + NADP(+) + H(+) = 2 oxidized [2Fe-2S]-[ferredoxin] + NADPH</text>
        <dbReference type="Rhea" id="RHEA:20125"/>
        <dbReference type="Rhea" id="RHEA-COMP:10000"/>
        <dbReference type="Rhea" id="RHEA-COMP:10001"/>
        <dbReference type="ChEBI" id="CHEBI:15378"/>
        <dbReference type="ChEBI" id="CHEBI:33737"/>
        <dbReference type="ChEBI" id="CHEBI:33738"/>
        <dbReference type="ChEBI" id="CHEBI:57783"/>
        <dbReference type="ChEBI" id="CHEBI:58349"/>
        <dbReference type="EC" id="1.18.1.2"/>
    </reaction>
</comment>
<comment type="cofactor">
    <cofactor evidence="1">
        <name>FAD</name>
        <dbReference type="ChEBI" id="CHEBI:57692"/>
    </cofactor>
    <text evidence="1">Binds 1 FAD per subunit.</text>
</comment>
<comment type="subunit">
    <text evidence="1">Homodimer.</text>
</comment>
<comment type="similarity">
    <text evidence="1">Belongs to the ferredoxin--NADP reductase type 2 family.</text>
</comment>
<name>FENR_SULTO</name>
<organism>
    <name type="scientific">Sulfurisphaera tokodaii (strain DSM 16993 / JCM 10545 / NBRC 100140 / 7)</name>
    <name type="common">Sulfolobus tokodaii</name>
    <dbReference type="NCBI Taxonomy" id="273063"/>
    <lineage>
        <taxon>Archaea</taxon>
        <taxon>Thermoproteota</taxon>
        <taxon>Thermoprotei</taxon>
        <taxon>Sulfolobales</taxon>
        <taxon>Sulfolobaceae</taxon>
        <taxon>Sulfurisphaera</taxon>
    </lineage>
</organism>
<accession>Q96YN9</accession>
<accession>F9VP95</accession>
<dbReference type="EC" id="1.18.1.2" evidence="1"/>
<dbReference type="EMBL" id="BA000023">
    <property type="protein sequence ID" value="BAK54742.1"/>
    <property type="molecule type" value="Genomic_DNA"/>
</dbReference>
<dbReference type="RefSeq" id="WP_052847017.1">
    <property type="nucleotide sequence ID" value="NC_003106.2"/>
</dbReference>
<dbReference type="SMR" id="Q96YN9"/>
<dbReference type="STRING" id="273063.STK_21330"/>
<dbReference type="KEGG" id="sto:STK_21330"/>
<dbReference type="PATRIC" id="fig|273063.9.peg.2425"/>
<dbReference type="eggNOG" id="arCOG01296">
    <property type="taxonomic scope" value="Archaea"/>
</dbReference>
<dbReference type="OrthoDB" id="27340at2157"/>
<dbReference type="BRENDA" id="1.18.1.2">
    <property type="organism ID" value="15396"/>
</dbReference>
<dbReference type="Proteomes" id="UP000001015">
    <property type="component" value="Chromosome"/>
</dbReference>
<dbReference type="GO" id="GO:0004324">
    <property type="term" value="F:ferredoxin-NADP+ reductase activity"/>
    <property type="evidence" value="ECO:0007669"/>
    <property type="project" value="UniProtKB-UniRule"/>
</dbReference>
<dbReference type="GO" id="GO:0050660">
    <property type="term" value="F:flavin adenine dinucleotide binding"/>
    <property type="evidence" value="ECO:0007669"/>
    <property type="project" value="UniProtKB-UniRule"/>
</dbReference>
<dbReference type="GO" id="GO:0050661">
    <property type="term" value="F:NADP binding"/>
    <property type="evidence" value="ECO:0007669"/>
    <property type="project" value="UniProtKB-UniRule"/>
</dbReference>
<dbReference type="Gene3D" id="3.50.50.60">
    <property type="entry name" value="FAD/NAD(P)-binding domain"/>
    <property type="match status" value="2"/>
</dbReference>
<dbReference type="HAMAP" id="MF_01685">
    <property type="entry name" value="FENR2"/>
    <property type="match status" value="1"/>
</dbReference>
<dbReference type="InterPro" id="IPR036188">
    <property type="entry name" value="FAD/NAD-bd_sf"/>
</dbReference>
<dbReference type="InterPro" id="IPR023753">
    <property type="entry name" value="FAD/NAD-binding_dom"/>
</dbReference>
<dbReference type="InterPro" id="IPR022890">
    <property type="entry name" value="Fd--NADP_Rdtase_type_2"/>
</dbReference>
<dbReference type="InterPro" id="IPR050097">
    <property type="entry name" value="Ferredoxin-NADP_redctase_2"/>
</dbReference>
<dbReference type="PANTHER" id="PTHR48105">
    <property type="entry name" value="THIOREDOXIN REDUCTASE 1-RELATED-RELATED"/>
    <property type="match status" value="1"/>
</dbReference>
<dbReference type="Pfam" id="PF07992">
    <property type="entry name" value="Pyr_redox_2"/>
    <property type="match status" value="1"/>
</dbReference>
<dbReference type="PRINTS" id="PR00368">
    <property type="entry name" value="FADPNR"/>
</dbReference>
<dbReference type="PRINTS" id="PR00469">
    <property type="entry name" value="PNDRDTASEII"/>
</dbReference>
<dbReference type="SUPFAM" id="SSF51905">
    <property type="entry name" value="FAD/NAD(P)-binding domain"/>
    <property type="match status" value="1"/>
</dbReference>
<sequence length="332" mass="36591">MTEYDMVVIGGGPVGLYATFYAGLRDMKALLIDAQDELGGQLVTLYPEKMVYDVGGFPGILAYELAQQLVEQAKMFSPDIRIKEWADMIERTQDNMWVVKTDKGNSFKTKTILIAAGIGKMTPSRLGAKGEVEYENKGVYYTVRRKKDFEGKRVLIVGGGDSAVDWALTLAPVAKSVTLIHRRDQFRAHERSVKQLYQVATVYTWHELKEVRGDGNRVTQAVIFDNRTKDEKILDVDAVIISIGFKGDLGNMPKWGVNMKGRDIIVNAKMETNLPGVYAAGDIASQEGAPKLALIAVGFGQAAIAVSVAKKYIDPNASLFAGHSSEMDKFKK</sequence>
<feature type="chain" id="PRO_0000364992" description="Ferredoxin--NADP reductase">
    <location>
        <begin position="1"/>
        <end position="332"/>
    </location>
</feature>
<feature type="binding site" evidence="1">
    <location>
        <position position="33"/>
    </location>
    <ligand>
        <name>FAD</name>
        <dbReference type="ChEBI" id="CHEBI:57692"/>
    </ligand>
</feature>
<feature type="binding site" evidence="1">
    <location>
        <position position="41"/>
    </location>
    <ligand>
        <name>FAD</name>
        <dbReference type="ChEBI" id="CHEBI:57692"/>
    </ligand>
</feature>
<feature type="binding site" evidence="1">
    <location>
        <position position="46"/>
    </location>
    <ligand>
        <name>FAD</name>
        <dbReference type="ChEBI" id="CHEBI:57692"/>
    </ligand>
</feature>
<feature type="binding site" evidence="1">
    <location>
        <position position="86"/>
    </location>
    <ligand>
        <name>FAD</name>
        <dbReference type="ChEBI" id="CHEBI:57692"/>
    </ligand>
</feature>
<feature type="binding site" evidence="1">
    <location>
        <position position="121"/>
    </location>
    <ligand>
        <name>FAD</name>
        <dbReference type="ChEBI" id="CHEBI:57692"/>
    </ligand>
</feature>
<feature type="binding site" evidence="1">
    <location>
        <position position="282"/>
    </location>
    <ligand>
        <name>FAD</name>
        <dbReference type="ChEBI" id="CHEBI:57692"/>
    </ligand>
</feature>
<feature type="binding site" evidence="1">
    <location>
        <position position="325"/>
    </location>
    <ligand>
        <name>FAD</name>
        <dbReference type="ChEBI" id="CHEBI:57692"/>
    </ligand>
</feature>
<proteinExistence type="inferred from homology"/>
<protein>
    <recommendedName>
        <fullName evidence="1">Ferredoxin--NADP reductase</fullName>
        <shortName evidence="1">FNR</shortName>
        <shortName evidence="1">Fd-NADP(+) reductase</shortName>
        <ecNumber evidence="1">1.18.1.2</ecNumber>
    </recommendedName>
</protein>
<gene>
    <name type="ordered locus">STK_21330</name>
</gene>
<evidence type="ECO:0000255" key="1">
    <source>
        <dbReference type="HAMAP-Rule" id="MF_01685"/>
    </source>
</evidence>
<keyword id="KW-0274">FAD</keyword>
<keyword id="KW-0285">Flavoprotein</keyword>
<keyword id="KW-0521">NADP</keyword>
<keyword id="KW-0560">Oxidoreductase</keyword>
<keyword id="KW-1185">Reference proteome</keyword>